<feature type="chain" id="PRO_1000055013" description="Small ribosomal subunit protein uS17">
    <location>
        <begin position="1"/>
        <end position="86"/>
    </location>
</feature>
<keyword id="KW-0687">Ribonucleoprotein</keyword>
<keyword id="KW-0689">Ribosomal protein</keyword>
<keyword id="KW-0694">RNA-binding</keyword>
<keyword id="KW-0699">rRNA-binding</keyword>
<name>RS17_ROSS1</name>
<protein>
    <recommendedName>
        <fullName evidence="1">Small ribosomal subunit protein uS17</fullName>
    </recommendedName>
    <alternativeName>
        <fullName evidence="2">30S ribosomal protein S17</fullName>
    </alternativeName>
</protein>
<comment type="function">
    <text evidence="1">One of the primary rRNA binding proteins, it binds specifically to the 5'-end of 16S ribosomal RNA.</text>
</comment>
<comment type="subunit">
    <text evidence="1">Part of the 30S ribosomal subunit.</text>
</comment>
<comment type="similarity">
    <text evidence="1">Belongs to the universal ribosomal protein uS17 family.</text>
</comment>
<proteinExistence type="inferred from homology"/>
<organism>
    <name type="scientific">Roseiflexus sp. (strain RS-1)</name>
    <dbReference type="NCBI Taxonomy" id="357808"/>
    <lineage>
        <taxon>Bacteria</taxon>
        <taxon>Bacillati</taxon>
        <taxon>Chloroflexota</taxon>
        <taxon>Chloroflexia</taxon>
        <taxon>Chloroflexales</taxon>
        <taxon>Roseiflexineae</taxon>
        <taxon>Roseiflexaceae</taxon>
        <taxon>Roseiflexus</taxon>
    </lineage>
</organism>
<gene>
    <name evidence="1" type="primary">rpsQ</name>
    <name type="ordered locus">RoseRS_1176</name>
</gene>
<dbReference type="EMBL" id="CP000686">
    <property type="protein sequence ID" value="ABQ89583.1"/>
    <property type="molecule type" value="Genomic_DNA"/>
</dbReference>
<dbReference type="RefSeq" id="WP_011955936.1">
    <property type="nucleotide sequence ID" value="NC_009523.1"/>
</dbReference>
<dbReference type="SMR" id="A5USI0"/>
<dbReference type="STRING" id="357808.RoseRS_1176"/>
<dbReference type="KEGG" id="rrs:RoseRS_1176"/>
<dbReference type="eggNOG" id="COG0186">
    <property type="taxonomic scope" value="Bacteria"/>
</dbReference>
<dbReference type="HOGENOM" id="CLU_073626_1_1_0"/>
<dbReference type="OrthoDB" id="9811714at2"/>
<dbReference type="Proteomes" id="UP000006554">
    <property type="component" value="Chromosome"/>
</dbReference>
<dbReference type="GO" id="GO:0022627">
    <property type="term" value="C:cytosolic small ribosomal subunit"/>
    <property type="evidence" value="ECO:0007669"/>
    <property type="project" value="TreeGrafter"/>
</dbReference>
<dbReference type="GO" id="GO:0019843">
    <property type="term" value="F:rRNA binding"/>
    <property type="evidence" value="ECO:0007669"/>
    <property type="project" value="UniProtKB-UniRule"/>
</dbReference>
<dbReference type="GO" id="GO:0003735">
    <property type="term" value="F:structural constituent of ribosome"/>
    <property type="evidence" value="ECO:0007669"/>
    <property type="project" value="InterPro"/>
</dbReference>
<dbReference type="GO" id="GO:0006412">
    <property type="term" value="P:translation"/>
    <property type="evidence" value="ECO:0007669"/>
    <property type="project" value="UniProtKB-UniRule"/>
</dbReference>
<dbReference type="CDD" id="cd00364">
    <property type="entry name" value="Ribosomal_uS17"/>
    <property type="match status" value="1"/>
</dbReference>
<dbReference type="Gene3D" id="2.40.50.140">
    <property type="entry name" value="Nucleic acid-binding proteins"/>
    <property type="match status" value="1"/>
</dbReference>
<dbReference type="HAMAP" id="MF_01345_B">
    <property type="entry name" value="Ribosomal_uS17_B"/>
    <property type="match status" value="1"/>
</dbReference>
<dbReference type="InterPro" id="IPR012340">
    <property type="entry name" value="NA-bd_OB-fold"/>
</dbReference>
<dbReference type="InterPro" id="IPR000266">
    <property type="entry name" value="Ribosomal_uS17"/>
</dbReference>
<dbReference type="InterPro" id="IPR019984">
    <property type="entry name" value="Ribosomal_uS17_bact/chlr"/>
</dbReference>
<dbReference type="InterPro" id="IPR019979">
    <property type="entry name" value="Ribosomal_uS17_CS"/>
</dbReference>
<dbReference type="NCBIfam" id="NF004123">
    <property type="entry name" value="PRK05610.1"/>
    <property type="match status" value="1"/>
</dbReference>
<dbReference type="NCBIfam" id="TIGR03635">
    <property type="entry name" value="uS17_bact"/>
    <property type="match status" value="1"/>
</dbReference>
<dbReference type="PANTHER" id="PTHR10744">
    <property type="entry name" value="40S RIBOSOMAL PROTEIN S11 FAMILY MEMBER"/>
    <property type="match status" value="1"/>
</dbReference>
<dbReference type="PANTHER" id="PTHR10744:SF1">
    <property type="entry name" value="SMALL RIBOSOMAL SUBUNIT PROTEIN US17M"/>
    <property type="match status" value="1"/>
</dbReference>
<dbReference type="Pfam" id="PF00366">
    <property type="entry name" value="Ribosomal_S17"/>
    <property type="match status" value="1"/>
</dbReference>
<dbReference type="PRINTS" id="PR00973">
    <property type="entry name" value="RIBOSOMALS17"/>
</dbReference>
<dbReference type="SUPFAM" id="SSF50249">
    <property type="entry name" value="Nucleic acid-binding proteins"/>
    <property type="match status" value="1"/>
</dbReference>
<dbReference type="PROSITE" id="PS00056">
    <property type="entry name" value="RIBOSOMAL_S17"/>
    <property type="match status" value="1"/>
</dbReference>
<sequence length="86" mass="10256">MTEARRRQFKVGRVVSNKMQKTVVVAVDYLKPHPLYRKIIRRTSKFHAHDEQQCRIGDIVRIGETRPLSKTKRWEVVEIIKRNEEA</sequence>
<evidence type="ECO:0000255" key="1">
    <source>
        <dbReference type="HAMAP-Rule" id="MF_01345"/>
    </source>
</evidence>
<evidence type="ECO:0000305" key="2"/>
<reference key="1">
    <citation type="submission" date="2007-04" db="EMBL/GenBank/DDBJ databases">
        <title>Complete sequence of Roseiflexus sp. RS-1.</title>
        <authorList>
            <consortium name="US DOE Joint Genome Institute"/>
            <person name="Copeland A."/>
            <person name="Lucas S."/>
            <person name="Lapidus A."/>
            <person name="Barry K."/>
            <person name="Detter J.C."/>
            <person name="Glavina del Rio T."/>
            <person name="Hammon N."/>
            <person name="Israni S."/>
            <person name="Dalin E."/>
            <person name="Tice H."/>
            <person name="Pitluck S."/>
            <person name="Chertkov O."/>
            <person name="Brettin T."/>
            <person name="Bruce D."/>
            <person name="Han C."/>
            <person name="Schmutz J."/>
            <person name="Larimer F."/>
            <person name="Land M."/>
            <person name="Hauser L."/>
            <person name="Kyrpides N."/>
            <person name="Mikhailova N."/>
            <person name="Bryant D.A."/>
            <person name="Richardson P."/>
        </authorList>
    </citation>
    <scope>NUCLEOTIDE SEQUENCE [LARGE SCALE GENOMIC DNA]</scope>
    <source>
        <strain>RS-1</strain>
    </source>
</reference>
<accession>A5USI0</accession>